<reference key="1">
    <citation type="journal article" date="2006" name="PLoS Biol.">
        <title>The genome of deep-sea vent chemolithoautotroph Thiomicrospira crunogena XCL-2.</title>
        <authorList>
            <person name="Scott K.M."/>
            <person name="Sievert S.M."/>
            <person name="Abril F.N."/>
            <person name="Ball L.A."/>
            <person name="Barrett C.J."/>
            <person name="Blake R.A."/>
            <person name="Boller A.J."/>
            <person name="Chain P.S.G."/>
            <person name="Clark J.A."/>
            <person name="Davis C.R."/>
            <person name="Detter C."/>
            <person name="Do K.F."/>
            <person name="Dobrinski K.P."/>
            <person name="Faza B.I."/>
            <person name="Fitzpatrick K.A."/>
            <person name="Freyermuth S.K."/>
            <person name="Harmer T.L."/>
            <person name="Hauser L.J."/>
            <person name="Huegler M."/>
            <person name="Kerfeld C.A."/>
            <person name="Klotz M.G."/>
            <person name="Kong W.W."/>
            <person name="Land M."/>
            <person name="Lapidus A."/>
            <person name="Larimer F.W."/>
            <person name="Longo D.L."/>
            <person name="Lucas S."/>
            <person name="Malfatti S.A."/>
            <person name="Massey S.E."/>
            <person name="Martin D.D."/>
            <person name="McCuddin Z."/>
            <person name="Meyer F."/>
            <person name="Moore J.L."/>
            <person name="Ocampo L.H. Jr."/>
            <person name="Paul J.H."/>
            <person name="Paulsen I.T."/>
            <person name="Reep D.K."/>
            <person name="Ren Q."/>
            <person name="Ross R.L."/>
            <person name="Sato P.Y."/>
            <person name="Thomas P."/>
            <person name="Tinkham L.E."/>
            <person name="Zeruth G.T."/>
        </authorList>
    </citation>
    <scope>NUCLEOTIDE SEQUENCE [LARGE SCALE GENOMIC DNA]</scope>
    <source>
        <strain>DSM 25203 / XCL-2</strain>
    </source>
</reference>
<gene>
    <name evidence="1" type="primary">azoR</name>
    <name type="ordered locus">Tcr_2059</name>
</gene>
<keyword id="KW-0285">Flavoprotein</keyword>
<keyword id="KW-0288">FMN</keyword>
<keyword id="KW-0520">NAD</keyword>
<keyword id="KW-0560">Oxidoreductase</keyword>
<proteinExistence type="inferred from homology"/>
<evidence type="ECO:0000255" key="1">
    <source>
        <dbReference type="HAMAP-Rule" id="MF_01216"/>
    </source>
</evidence>
<accession>Q31DX4</accession>
<protein>
    <recommendedName>
        <fullName evidence="1">FMN-dependent NADH:quinone oxidoreductase</fullName>
        <ecNumber evidence="1">1.6.5.-</ecNumber>
    </recommendedName>
    <alternativeName>
        <fullName evidence="1">Azo-dye reductase</fullName>
    </alternativeName>
    <alternativeName>
        <fullName evidence="1">FMN-dependent NADH-azo compound oxidoreductase</fullName>
    </alternativeName>
    <alternativeName>
        <fullName evidence="1">FMN-dependent NADH-azoreductase</fullName>
        <ecNumber evidence="1">1.7.1.17</ecNumber>
    </alternativeName>
</protein>
<organism>
    <name type="scientific">Hydrogenovibrio crunogenus (strain DSM 25203 / XCL-2)</name>
    <name type="common">Thiomicrospira crunogena</name>
    <dbReference type="NCBI Taxonomy" id="317025"/>
    <lineage>
        <taxon>Bacteria</taxon>
        <taxon>Pseudomonadati</taxon>
        <taxon>Pseudomonadota</taxon>
        <taxon>Gammaproteobacteria</taxon>
        <taxon>Thiotrichales</taxon>
        <taxon>Piscirickettsiaceae</taxon>
        <taxon>Hydrogenovibrio</taxon>
    </lineage>
</organism>
<name>AZOR_HYDCU</name>
<feature type="chain" id="PRO_0000245983" description="FMN-dependent NADH:quinone oxidoreductase">
    <location>
        <begin position="1"/>
        <end position="202"/>
    </location>
</feature>
<feature type="binding site" evidence="1">
    <location>
        <position position="10"/>
    </location>
    <ligand>
        <name>FMN</name>
        <dbReference type="ChEBI" id="CHEBI:58210"/>
    </ligand>
</feature>
<feature type="binding site" evidence="1">
    <location>
        <begin position="16"/>
        <end position="18"/>
    </location>
    <ligand>
        <name>FMN</name>
        <dbReference type="ChEBI" id="CHEBI:58210"/>
    </ligand>
</feature>
<feature type="binding site" evidence="1">
    <location>
        <begin position="96"/>
        <end position="99"/>
    </location>
    <ligand>
        <name>FMN</name>
        <dbReference type="ChEBI" id="CHEBI:58210"/>
    </ligand>
</feature>
<comment type="function">
    <text evidence="1">Quinone reductase that provides resistance to thiol-specific stress caused by electrophilic quinones.</text>
</comment>
<comment type="function">
    <text evidence="1">Also exhibits azoreductase activity. Catalyzes the reductive cleavage of the azo bond in aromatic azo compounds to the corresponding amines.</text>
</comment>
<comment type="catalytic activity">
    <reaction evidence="1">
        <text>2 a quinone + NADH + H(+) = 2 a 1,4-benzosemiquinone + NAD(+)</text>
        <dbReference type="Rhea" id="RHEA:65952"/>
        <dbReference type="ChEBI" id="CHEBI:15378"/>
        <dbReference type="ChEBI" id="CHEBI:57540"/>
        <dbReference type="ChEBI" id="CHEBI:57945"/>
        <dbReference type="ChEBI" id="CHEBI:132124"/>
        <dbReference type="ChEBI" id="CHEBI:134225"/>
    </reaction>
</comment>
<comment type="catalytic activity">
    <reaction evidence="1">
        <text>N,N-dimethyl-1,4-phenylenediamine + anthranilate + 2 NAD(+) = 2-(4-dimethylaminophenyl)diazenylbenzoate + 2 NADH + 2 H(+)</text>
        <dbReference type="Rhea" id="RHEA:55872"/>
        <dbReference type="ChEBI" id="CHEBI:15378"/>
        <dbReference type="ChEBI" id="CHEBI:15783"/>
        <dbReference type="ChEBI" id="CHEBI:16567"/>
        <dbReference type="ChEBI" id="CHEBI:57540"/>
        <dbReference type="ChEBI" id="CHEBI:57945"/>
        <dbReference type="ChEBI" id="CHEBI:71579"/>
        <dbReference type="EC" id="1.7.1.17"/>
    </reaction>
</comment>
<comment type="cofactor">
    <cofactor evidence="1">
        <name>FMN</name>
        <dbReference type="ChEBI" id="CHEBI:58210"/>
    </cofactor>
    <text evidence="1">Binds 1 FMN per subunit.</text>
</comment>
<comment type="subunit">
    <text evidence="1">Homodimer.</text>
</comment>
<comment type="similarity">
    <text evidence="1">Belongs to the azoreductase type 1 family.</text>
</comment>
<dbReference type="EC" id="1.6.5.-" evidence="1"/>
<dbReference type="EC" id="1.7.1.17" evidence="1"/>
<dbReference type="EMBL" id="CP000109">
    <property type="protein sequence ID" value="ABB42649.1"/>
    <property type="molecule type" value="Genomic_DNA"/>
</dbReference>
<dbReference type="SMR" id="Q31DX4"/>
<dbReference type="STRING" id="317025.Tcr_2059"/>
<dbReference type="KEGG" id="tcx:Tcr_2059"/>
<dbReference type="eggNOG" id="COG1182">
    <property type="taxonomic scope" value="Bacteria"/>
</dbReference>
<dbReference type="HOGENOM" id="CLU_088964_0_0_6"/>
<dbReference type="OrthoDB" id="9787136at2"/>
<dbReference type="GO" id="GO:0009055">
    <property type="term" value="F:electron transfer activity"/>
    <property type="evidence" value="ECO:0007669"/>
    <property type="project" value="UniProtKB-UniRule"/>
</dbReference>
<dbReference type="GO" id="GO:0010181">
    <property type="term" value="F:FMN binding"/>
    <property type="evidence" value="ECO:0007669"/>
    <property type="project" value="UniProtKB-UniRule"/>
</dbReference>
<dbReference type="GO" id="GO:0016652">
    <property type="term" value="F:oxidoreductase activity, acting on NAD(P)H as acceptor"/>
    <property type="evidence" value="ECO:0007669"/>
    <property type="project" value="UniProtKB-UniRule"/>
</dbReference>
<dbReference type="GO" id="GO:0016655">
    <property type="term" value="F:oxidoreductase activity, acting on NAD(P)H, quinone or similar compound as acceptor"/>
    <property type="evidence" value="ECO:0007669"/>
    <property type="project" value="InterPro"/>
</dbReference>
<dbReference type="Gene3D" id="3.40.50.360">
    <property type="match status" value="1"/>
</dbReference>
<dbReference type="HAMAP" id="MF_01216">
    <property type="entry name" value="Azoreductase_type1"/>
    <property type="match status" value="1"/>
</dbReference>
<dbReference type="InterPro" id="IPR003680">
    <property type="entry name" value="Flavodoxin_fold"/>
</dbReference>
<dbReference type="InterPro" id="IPR029039">
    <property type="entry name" value="Flavoprotein-like_sf"/>
</dbReference>
<dbReference type="InterPro" id="IPR050104">
    <property type="entry name" value="FMN-dep_NADH:Q_OxRdtase_AzoR1"/>
</dbReference>
<dbReference type="InterPro" id="IPR023048">
    <property type="entry name" value="NADH:quinone_OxRdtase_FMN_depd"/>
</dbReference>
<dbReference type="PANTHER" id="PTHR43741">
    <property type="entry name" value="FMN-DEPENDENT NADH-AZOREDUCTASE 1"/>
    <property type="match status" value="1"/>
</dbReference>
<dbReference type="PANTHER" id="PTHR43741:SF2">
    <property type="entry name" value="FMN-DEPENDENT NADH:QUINONE OXIDOREDUCTASE"/>
    <property type="match status" value="1"/>
</dbReference>
<dbReference type="Pfam" id="PF02525">
    <property type="entry name" value="Flavodoxin_2"/>
    <property type="match status" value="1"/>
</dbReference>
<dbReference type="SUPFAM" id="SSF52218">
    <property type="entry name" value="Flavoproteins"/>
    <property type="match status" value="1"/>
</dbReference>
<sequence length="202" mass="21958">MATVLRIDSSALSNGSHSKALADFFQTQWLEKHPTDSFQTLDLSQTPPPHLSEATIGAMFTPTEERSKEQTQQLALSTDYIEQLKKADVILISTPMYNFGIPSTLKAYLDHSLRVGETFVYTDKGPKGLLEGKKAIVVAASGGDYTQSPLDAMNFVTPYLKTALGFIGIEDVTLVEAPGMAGDEASINKSIKQAKQTLQNCL</sequence>